<accession>P66194</accession>
<accession>Q8XGM1</accession>
<feature type="chain" id="PRO_0000173253" description="Large ribosomal subunit protein bL31B">
    <location>
        <begin position="1"/>
        <end position="86"/>
    </location>
</feature>
<proteinExistence type="evidence at transcript level"/>
<name>RL31B_SALTI</name>
<keyword id="KW-0687">Ribonucleoprotein</keyword>
<keyword id="KW-0689">Ribosomal protein</keyword>
<evidence type="ECO:0000250" key="1"/>
<evidence type="ECO:0000305" key="2"/>
<comment type="subunit">
    <text evidence="1">Part of the 50S ribosomal subunit.</text>
</comment>
<comment type="induction">
    <text>May be induced under zinc-limiting conditions; in that case may be repressed by the zinc uptake regulation protein zur.</text>
</comment>
<comment type="similarity">
    <text evidence="2">Belongs to the bacterial ribosomal protein bL31 family. Type B subfamily.</text>
</comment>
<protein>
    <recommendedName>
        <fullName evidence="2">Large ribosomal subunit protein bL31B</fullName>
    </recommendedName>
    <alternativeName>
        <fullName>50S ribosomal protein L31 type B</fullName>
    </alternativeName>
</protein>
<sequence length="86" mass="9815">MKPDIHPVYRTVVFHDTSANEYVKVGSTIKTEREIELDGVTYPYVTIDVSSKSHPFYTGRQKTFDSESSAARFQKRFGHFIGAKRG</sequence>
<organism>
    <name type="scientific">Salmonella typhi</name>
    <dbReference type="NCBI Taxonomy" id="90370"/>
    <lineage>
        <taxon>Bacteria</taxon>
        <taxon>Pseudomonadati</taxon>
        <taxon>Pseudomonadota</taxon>
        <taxon>Gammaproteobacteria</taxon>
        <taxon>Enterobacterales</taxon>
        <taxon>Enterobacteriaceae</taxon>
        <taxon>Salmonella</taxon>
    </lineage>
</organism>
<gene>
    <name type="primary">rpmE2</name>
    <name type="ordered locus">STY0512</name>
    <name type="ordered locus">t2391</name>
</gene>
<reference key="1">
    <citation type="journal article" date="2001" name="Nature">
        <title>Complete genome sequence of a multiple drug resistant Salmonella enterica serovar Typhi CT18.</title>
        <authorList>
            <person name="Parkhill J."/>
            <person name="Dougan G."/>
            <person name="James K.D."/>
            <person name="Thomson N.R."/>
            <person name="Pickard D."/>
            <person name="Wain J."/>
            <person name="Churcher C.M."/>
            <person name="Mungall K.L."/>
            <person name="Bentley S.D."/>
            <person name="Holden M.T.G."/>
            <person name="Sebaihia M."/>
            <person name="Baker S."/>
            <person name="Basham D."/>
            <person name="Brooks K."/>
            <person name="Chillingworth T."/>
            <person name="Connerton P."/>
            <person name="Cronin A."/>
            <person name="Davis P."/>
            <person name="Davies R.M."/>
            <person name="Dowd L."/>
            <person name="White N."/>
            <person name="Farrar J."/>
            <person name="Feltwell T."/>
            <person name="Hamlin N."/>
            <person name="Haque A."/>
            <person name="Hien T.T."/>
            <person name="Holroyd S."/>
            <person name="Jagels K."/>
            <person name="Krogh A."/>
            <person name="Larsen T.S."/>
            <person name="Leather S."/>
            <person name="Moule S."/>
            <person name="O'Gaora P."/>
            <person name="Parry C."/>
            <person name="Quail M.A."/>
            <person name="Rutherford K.M."/>
            <person name="Simmonds M."/>
            <person name="Skelton J."/>
            <person name="Stevens K."/>
            <person name="Whitehead S."/>
            <person name="Barrell B.G."/>
        </authorList>
    </citation>
    <scope>NUCLEOTIDE SEQUENCE [LARGE SCALE GENOMIC DNA]</scope>
    <source>
        <strain>CT18</strain>
    </source>
</reference>
<reference key="2">
    <citation type="journal article" date="2003" name="J. Bacteriol.">
        <title>Comparative genomics of Salmonella enterica serovar Typhi strains Ty2 and CT18.</title>
        <authorList>
            <person name="Deng W."/>
            <person name="Liou S.-R."/>
            <person name="Plunkett G. III"/>
            <person name="Mayhew G.F."/>
            <person name="Rose D.J."/>
            <person name="Burland V."/>
            <person name="Kodoyianni V."/>
            <person name="Schwartz D.C."/>
            <person name="Blattner F.R."/>
        </authorList>
    </citation>
    <scope>NUCLEOTIDE SEQUENCE [LARGE SCALE GENOMIC DNA]</scope>
    <source>
        <strain>ATCC 700931 / Ty2</strain>
    </source>
</reference>
<reference key="3">
    <citation type="journal article" date="2003" name="Proc. Natl. Acad. Sci. U.S.A.">
        <title>Comparative genomics of bacterial zinc regulons: enhanced ion transport, pathogenesis, and rearrangement of ribosomal proteins.</title>
        <authorList>
            <person name="Panina E.M."/>
            <person name="Mironov A.A."/>
            <person name="Gelfand M.S."/>
        </authorList>
    </citation>
    <scope>DISCUSSION OF POSSIBLE REGULATION</scope>
    <source>
        <strain>CT18</strain>
    </source>
</reference>
<dbReference type="EMBL" id="AL513382">
    <property type="protein sequence ID" value="CAD04954.1"/>
    <property type="molecule type" value="Genomic_DNA"/>
</dbReference>
<dbReference type="EMBL" id="AE014613">
    <property type="protein sequence ID" value="AAO69981.1"/>
    <property type="molecule type" value="Genomic_DNA"/>
</dbReference>
<dbReference type="RefSeq" id="NP_455066.1">
    <property type="nucleotide sequence ID" value="NC_003198.1"/>
</dbReference>
<dbReference type="RefSeq" id="WP_000801415.1">
    <property type="nucleotide sequence ID" value="NZ_WSUR01000008.1"/>
</dbReference>
<dbReference type="SMR" id="P66194"/>
<dbReference type="STRING" id="220341.gene:17584534"/>
<dbReference type="KEGG" id="stt:t2391"/>
<dbReference type="KEGG" id="sty:STY0512"/>
<dbReference type="PATRIC" id="fig|220341.7.peg.515"/>
<dbReference type="eggNOG" id="COG0254">
    <property type="taxonomic scope" value="Bacteria"/>
</dbReference>
<dbReference type="HOGENOM" id="CLU_114306_2_1_6"/>
<dbReference type="OMA" id="YRLVAFK"/>
<dbReference type="OrthoDB" id="9803251at2"/>
<dbReference type="Proteomes" id="UP000000541">
    <property type="component" value="Chromosome"/>
</dbReference>
<dbReference type="Proteomes" id="UP000002670">
    <property type="component" value="Chromosome"/>
</dbReference>
<dbReference type="GO" id="GO:1990904">
    <property type="term" value="C:ribonucleoprotein complex"/>
    <property type="evidence" value="ECO:0007669"/>
    <property type="project" value="UniProtKB-KW"/>
</dbReference>
<dbReference type="GO" id="GO:0005840">
    <property type="term" value="C:ribosome"/>
    <property type="evidence" value="ECO:0007669"/>
    <property type="project" value="UniProtKB-KW"/>
</dbReference>
<dbReference type="GO" id="GO:0003735">
    <property type="term" value="F:structural constituent of ribosome"/>
    <property type="evidence" value="ECO:0007669"/>
    <property type="project" value="InterPro"/>
</dbReference>
<dbReference type="GO" id="GO:0006412">
    <property type="term" value="P:translation"/>
    <property type="evidence" value="ECO:0007669"/>
    <property type="project" value="UniProtKB-UniRule"/>
</dbReference>
<dbReference type="Gene3D" id="4.10.830.30">
    <property type="entry name" value="Ribosomal protein L31"/>
    <property type="match status" value="1"/>
</dbReference>
<dbReference type="HAMAP" id="MF_00502">
    <property type="entry name" value="Ribosomal_bL31_2"/>
    <property type="match status" value="1"/>
</dbReference>
<dbReference type="InterPro" id="IPR034704">
    <property type="entry name" value="Ribosomal_bL28/bL31-like_sf"/>
</dbReference>
<dbReference type="InterPro" id="IPR002150">
    <property type="entry name" value="Ribosomal_bL31"/>
</dbReference>
<dbReference type="InterPro" id="IPR027493">
    <property type="entry name" value="Ribosomal_bL31_B"/>
</dbReference>
<dbReference type="InterPro" id="IPR042105">
    <property type="entry name" value="Ribosomal_bL31_sf"/>
</dbReference>
<dbReference type="NCBIfam" id="TIGR00105">
    <property type="entry name" value="L31"/>
    <property type="match status" value="1"/>
</dbReference>
<dbReference type="NCBIfam" id="NF002462">
    <property type="entry name" value="PRK01678.1"/>
    <property type="match status" value="1"/>
</dbReference>
<dbReference type="PANTHER" id="PTHR33280">
    <property type="entry name" value="50S RIBOSOMAL PROTEIN L31, CHLOROPLASTIC"/>
    <property type="match status" value="1"/>
</dbReference>
<dbReference type="PANTHER" id="PTHR33280:SF1">
    <property type="entry name" value="LARGE RIBOSOMAL SUBUNIT PROTEIN BL31C"/>
    <property type="match status" value="1"/>
</dbReference>
<dbReference type="Pfam" id="PF01197">
    <property type="entry name" value="Ribosomal_L31"/>
    <property type="match status" value="1"/>
</dbReference>
<dbReference type="PRINTS" id="PR01249">
    <property type="entry name" value="RIBOSOMALL31"/>
</dbReference>
<dbReference type="SUPFAM" id="SSF143800">
    <property type="entry name" value="L28p-like"/>
    <property type="match status" value="1"/>
</dbReference>